<accession>A1BJ10</accession>
<comment type="function">
    <text evidence="1">Located at the top of the head of the 30S subunit, it contacts several helices of the 16S rRNA. In the 70S ribosome it contacts the 23S rRNA (bridge B1a) and protein L5 of the 50S subunit (bridge B1b), connecting the 2 subunits; these bridges are implicated in subunit movement. Contacts the tRNAs in the A and P-sites.</text>
</comment>
<comment type="subunit">
    <text evidence="1">Part of the 30S ribosomal subunit. Forms a loose heterodimer with protein S19. Forms two bridges to the 50S subunit in the 70S ribosome.</text>
</comment>
<comment type="similarity">
    <text evidence="1">Belongs to the universal ribosomal protein uS13 family.</text>
</comment>
<reference key="1">
    <citation type="submission" date="2006-12" db="EMBL/GenBank/DDBJ databases">
        <title>Complete sequence of Chlorobium phaeobacteroides DSM 266.</title>
        <authorList>
            <consortium name="US DOE Joint Genome Institute"/>
            <person name="Copeland A."/>
            <person name="Lucas S."/>
            <person name="Lapidus A."/>
            <person name="Barry K."/>
            <person name="Detter J.C."/>
            <person name="Glavina del Rio T."/>
            <person name="Hammon N."/>
            <person name="Israni S."/>
            <person name="Pitluck S."/>
            <person name="Goltsman E."/>
            <person name="Schmutz J."/>
            <person name="Larimer F."/>
            <person name="Land M."/>
            <person name="Hauser L."/>
            <person name="Mikhailova N."/>
            <person name="Li T."/>
            <person name="Overmann J."/>
            <person name="Bryant D.A."/>
            <person name="Richardson P."/>
        </authorList>
    </citation>
    <scope>NUCLEOTIDE SEQUENCE [LARGE SCALE GENOMIC DNA]</scope>
    <source>
        <strain>DSM 266 / SMG 266 / 2430</strain>
    </source>
</reference>
<gene>
    <name evidence="1" type="primary">rpsM</name>
    <name type="ordered locus">Cpha266_2399</name>
</gene>
<feature type="chain" id="PRO_0000306585" description="Small ribosomal subunit protein uS13">
    <location>
        <begin position="1"/>
        <end position="125"/>
    </location>
</feature>
<feature type="region of interest" description="Disordered" evidence="2">
    <location>
        <begin position="92"/>
        <end position="125"/>
    </location>
</feature>
<feature type="compositionally biased region" description="Basic residues" evidence="2">
    <location>
        <begin position="107"/>
        <end position="125"/>
    </location>
</feature>
<proteinExistence type="inferred from homology"/>
<evidence type="ECO:0000255" key="1">
    <source>
        <dbReference type="HAMAP-Rule" id="MF_01315"/>
    </source>
</evidence>
<evidence type="ECO:0000256" key="2">
    <source>
        <dbReference type="SAM" id="MobiDB-lite"/>
    </source>
</evidence>
<evidence type="ECO:0000305" key="3"/>
<keyword id="KW-1185">Reference proteome</keyword>
<keyword id="KW-0687">Ribonucleoprotein</keyword>
<keyword id="KW-0689">Ribosomal protein</keyword>
<keyword id="KW-0694">RNA-binding</keyword>
<keyword id="KW-0699">rRNA-binding</keyword>
<keyword id="KW-0820">tRNA-binding</keyword>
<name>RS13_CHLPD</name>
<dbReference type="EMBL" id="CP000492">
    <property type="protein sequence ID" value="ABL66387.1"/>
    <property type="molecule type" value="Genomic_DNA"/>
</dbReference>
<dbReference type="RefSeq" id="WP_011746170.1">
    <property type="nucleotide sequence ID" value="NC_008639.1"/>
</dbReference>
<dbReference type="SMR" id="A1BJ10"/>
<dbReference type="STRING" id="290317.Cpha266_2399"/>
<dbReference type="KEGG" id="cph:Cpha266_2399"/>
<dbReference type="eggNOG" id="COG0099">
    <property type="taxonomic scope" value="Bacteria"/>
</dbReference>
<dbReference type="HOGENOM" id="CLU_103849_1_2_10"/>
<dbReference type="OrthoDB" id="9803610at2"/>
<dbReference type="Proteomes" id="UP000008701">
    <property type="component" value="Chromosome"/>
</dbReference>
<dbReference type="GO" id="GO:0005829">
    <property type="term" value="C:cytosol"/>
    <property type="evidence" value="ECO:0007669"/>
    <property type="project" value="TreeGrafter"/>
</dbReference>
<dbReference type="GO" id="GO:0015935">
    <property type="term" value="C:small ribosomal subunit"/>
    <property type="evidence" value="ECO:0007669"/>
    <property type="project" value="TreeGrafter"/>
</dbReference>
<dbReference type="GO" id="GO:0019843">
    <property type="term" value="F:rRNA binding"/>
    <property type="evidence" value="ECO:0007669"/>
    <property type="project" value="UniProtKB-UniRule"/>
</dbReference>
<dbReference type="GO" id="GO:0003735">
    <property type="term" value="F:structural constituent of ribosome"/>
    <property type="evidence" value="ECO:0007669"/>
    <property type="project" value="InterPro"/>
</dbReference>
<dbReference type="GO" id="GO:0000049">
    <property type="term" value="F:tRNA binding"/>
    <property type="evidence" value="ECO:0007669"/>
    <property type="project" value="UniProtKB-UniRule"/>
</dbReference>
<dbReference type="GO" id="GO:0006412">
    <property type="term" value="P:translation"/>
    <property type="evidence" value="ECO:0007669"/>
    <property type="project" value="UniProtKB-UniRule"/>
</dbReference>
<dbReference type="FunFam" id="1.10.8.50:FF:000001">
    <property type="entry name" value="30S ribosomal protein S13"/>
    <property type="match status" value="1"/>
</dbReference>
<dbReference type="FunFam" id="4.10.910.10:FF:000001">
    <property type="entry name" value="30S ribosomal protein S13"/>
    <property type="match status" value="1"/>
</dbReference>
<dbReference type="Gene3D" id="1.10.8.50">
    <property type="match status" value="1"/>
</dbReference>
<dbReference type="Gene3D" id="4.10.910.10">
    <property type="entry name" value="30s ribosomal protein s13, domain 2"/>
    <property type="match status" value="1"/>
</dbReference>
<dbReference type="HAMAP" id="MF_01315">
    <property type="entry name" value="Ribosomal_uS13"/>
    <property type="match status" value="1"/>
</dbReference>
<dbReference type="InterPro" id="IPR027437">
    <property type="entry name" value="Rbsml_uS13_C"/>
</dbReference>
<dbReference type="InterPro" id="IPR001892">
    <property type="entry name" value="Ribosomal_uS13"/>
</dbReference>
<dbReference type="InterPro" id="IPR010979">
    <property type="entry name" value="Ribosomal_uS13-like_H2TH"/>
</dbReference>
<dbReference type="InterPro" id="IPR019980">
    <property type="entry name" value="Ribosomal_uS13_bac-type"/>
</dbReference>
<dbReference type="InterPro" id="IPR018269">
    <property type="entry name" value="Ribosomal_uS13_CS"/>
</dbReference>
<dbReference type="NCBIfam" id="TIGR03631">
    <property type="entry name" value="uS13_bact"/>
    <property type="match status" value="1"/>
</dbReference>
<dbReference type="PANTHER" id="PTHR10871">
    <property type="entry name" value="30S RIBOSOMAL PROTEIN S13/40S RIBOSOMAL PROTEIN S18"/>
    <property type="match status" value="1"/>
</dbReference>
<dbReference type="PANTHER" id="PTHR10871:SF1">
    <property type="entry name" value="SMALL RIBOSOMAL SUBUNIT PROTEIN US13M"/>
    <property type="match status" value="1"/>
</dbReference>
<dbReference type="Pfam" id="PF00416">
    <property type="entry name" value="Ribosomal_S13"/>
    <property type="match status" value="1"/>
</dbReference>
<dbReference type="PIRSF" id="PIRSF002134">
    <property type="entry name" value="Ribosomal_S13"/>
    <property type="match status" value="1"/>
</dbReference>
<dbReference type="SUPFAM" id="SSF46946">
    <property type="entry name" value="S13-like H2TH domain"/>
    <property type="match status" value="1"/>
</dbReference>
<dbReference type="PROSITE" id="PS00646">
    <property type="entry name" value="RIBOSOMAL_S13_1"/>
    <property type="match status" value="1"/>
</dbReference>
<dbReference type="PROSITE" id="PS50159">
    <property type="entry name" value="RIBOSOMAL_S13_2"/>
    <property type="match status" value="1"/>
</dbReference>
<protein>
    <recommendedName>
        <fullName evidence="1">Small ribosomal subunit protein uS13</fullName>
    </recommendedName>
    <alternativeName>
        <fullName evidence="3">30S ribosomal protein S13</fullName>
    </alternativeName>
</protein>
<organism>
    <name type="scientific">Chlorobium phaeobacteroides (strain DSM 266 / SMG 266 / 2430)</name>
    <dbReference type="NCBI Taxonomy" id="290317"/>
    <lineage>
        <taxon>Bacteria</taxon>
        <taxon>Pseudomonadati</taxon>
        <taxon>Chlorobiota</taxon>
        <taxon>Chlorobiia</taxon>
        <taxon>Chlorobiales</taxon>
        <taxon>Chlorobiaceae</taxon>
        <taxon>Chlorobium/Pelodictyon group</taxon>
        <taxon>Chlorobium</taxon>
    </lineage>
</organism>
<sequence>MRIAGVNLPLNKHAVIALTHVYGIGKTSAKSILQRAGIAPERKISELNDEEAHAIREIIAEDYKVEGQARGEQQLAVKRLMDIGCYRGLRHRRSLPVRGQRTQTNARTRKGKRKTVAGKKKATKK</sequence>